<protein>
    <recommendedName>
        <fullName evidence="1">Hydroxyacylglutathione hydrolase</fullName>
        <ecNumber evidence="1">3.1.2.6</ecNumber>
    </recommendedName>
    <alternativeName>
        <fullName evidence="1">Glyoxalase II</fullName>
        <shortName evidence="1">Glx II</shortName>
    </alternativeName>
</protein>
<dbReference type="EC" id="3.1.2.6" evidence="1"/>
<dbReference type="EMBL" id="CR628337">
    <property type="protein sequence ID" value="CAH15496.1"/>
    <property type="molecule type" value="Genomic_DNA"/>
</dbReference>
<dbReference type="RefSeq" id="WP_011215339.1">
    <property type="nucleotide sequence ID" value="NC_006369.1"/>
</dbReference>
<dbReference type="SMR" id="Q5WX41"/>
<dbReference type="KEGG" id="lpf:lpl1257"/>
<dbReference type="LegioList" id="lpl1257"/>
<dbReference type="HOGENOM" id="CLU_030571_4_1_6"/>
<dbReference type="UniPathway" id="UPA00619">
    <property type="reaction ID" value="UER00676"/>
</dbReference>
<dbReference type="Proteomes" id="UP000002517">
    <property type="component" value="Chromosome"/>
</dbReference>
<dbReference type="GO" id="GO:0004416">
    <property type="term" value="F:hydroxyacylglutathione hydrolase activity"/>
    <property type="evidence" value="ECO:0007669"/>
    <property type="project" value="UniProtKB-UniRule"/>
</dbReference>
<dbReference type="GO" id="GO:0046872">
    <property type="term" value="F:metal ion binding"/>
    <property type="evidence" value="ECO:0007669"/>
    <property type="project" value="UniProtKB-KW"/>
</dbReference>
<dbReference type="GO" id="GO:0019243">
    <property type="term" value="P:methylglyoxal catabolic process to D-lactate via S-lactoyl-glutathione"/>
    <property type="evidence" value="ECO:0007669"/>
    <property type="project" value="InterPro"/>
</dbReference>
<dbReference type="CDD" id="cd07723">
    <property type="entry name" value="hydroxyacylglutathione_hydrolase_MBL-fold"/>
    <property type="match status" value="1"/>
</dbReference>
<dbReference type="Gene3D" id="3.60.15.10">
    <property type="entry name" value="Ribonuclease Z/Hydroxyacylglutathione hydrolase-like"/>
    <property type="match status" value="1"/>
</dbReference>
<dbReference type="HAMAP" id="MF_01374">
    <property type="entry name" value="Glyoxalase_2"/>
    <property type="match status" value="1"/>
</dbReference>
<dbReference type="InterPro" id="IPR035680">
    <property type="entry name" value="Clx_II_MBL"/>
</dbReference>
<dbReference type="InterPro" id="IPR050110">
    <property type="entry name" value="Glyoxalase_II_hydrolase"/>
</dbReference>
<dbReference type="InterPro" id="IPR032282">
    <property type="entry name" value="HAGH_C"/>
</dbReference>
<dbReference type="InterPro" id="IPR017782">
    <property type="entry name" value="Hydroxyacylglutathione_Hdrlase"/>
</dbReference>
<dbReference type="InterPro" id="IPR001279">
    <property type="entry name" value="Metallo-B-lactamas"/>
</dbReference>
<dbReference type="InterPro" id="IPR036866">
    <property type="entry name" value="RibonucZ/Hydroxyglut_hydro"/>
</dbReference>
<dbReference type="NCBIfam" id="TIGR03413">
    <property type="entry name" value="GSH_gloB"/>
    <property type="match status" value="1"/>
</dbReference>
<dbReference type="PANTHER" id="PTHR43705">
    <property type="entry name" value="HYDROXYACYLGLUTATHIONE HYDROLASE"/>
    <property type="match status" value="1"/>
</dbReference>
<dbReference type="PANTHER" id="PTHR43705:SF1">
    <property type="entry name" value="HYDROXYACYLGLUTATHIONE HYDROLASE GLOB"/>
    <property type="match status" value="1"/>
</dbReference>
<dbReference type="Pfam" id="PF16123">
    <property type="entry name" value="HAGH_C"/>
    <property type="match status" value="1"/>
</dbReference>
<dbReference type="Pfam" id="PF00753">
    <property type="entry name" value="Lactamase_B"/>
    <property type="match status" value="1"/>
</dbReference>
<dbReference type="PIRSF" id="PIRSF005457">
    <property type="entry name" value="Glx"/>
    <property type="match status" value="1"/>
</dbReference>
<dbReference type="SMART" id="SM00849">
    <property type="entry name" value="Lactamase_B"/>
    <property type="match status" value="1"/>
</dbReference>
<dbReference type="SUPFAM" id="SSF56281">
    <property type="entry name" value="Metallo-hydrolase/oxidoreductase"/>
    <property type="match status" value="1"/>
</dbReference>
<gene>
    <name evidence="1" type="primary">gloB</name>
    <name type="ordered locus">lpl1257</name>
</gene>
<accession>Q5WX41</accession>
<evidence type="ECO:0000255" key="1">
    <source>
        <dbReference type="HAMAP-Rule" id="MF_01374"/>
    </source>
</evidence>
<keyword id="KW-0378">Hydrolase</keyword>
<keyword id="KW-0479">Metal-binding</keyword>
<keyword id="KW-0862">Zinc</keyword>
<name>GLO2_LEGPL</name>
<feature type="chain" id="PRO_0000309653" description="Hydroxyacylglutathione hydrolase">
    <location>
        <begin position="1"/>
        <end position="254"/>
    </location>
</feature>
<feature type="binding site" evidence="1">
    <location>
        <position position="54"/>
    </location>
    <ligand>
        <name>Zn(2+)</name>
        <dbReference type="ChEBI" id="CHEBI:29105"/>
        <label>1</label>
    </ligand>
</feature>
<feature type="binding site" evidence="1">
    <location>
        <position position="56"/>
    </location>
    <ligand>
        <name>Zn(2+)</name>
        <dbReference type="ChEBI" id="CHEBI:29105"/>
        <label>1</label>
    </ligand>
</feature>
<feature type="binding site" evidence="1">
    <location>
        <position position="58"/>
    </location>
    <ligand>
        <name>Zn(2+)</name>
        <dbReference type="ChEBI" id="CHEBI:29105"/>
        <label>2</label>
    </ligand>
</feature>
<feature type="binding site" evidence="1">
    <location>
        <position position="59"/>
    </location>
    <ligand>
        <name>Zn(2+)</name>
        <dbReference type="ChEBI" id="CHEBI:29105"/>
        <label>2</label>
    </ligand>
</feature>
<feature type="binding site" evidence="1">
    <location>
        <position position="111"/>
    </location>
    <ligand>
        <name>Zn(2+)</name>
        <dbReference type="ChEBI" id="CHEBI:29105"/>
        <label>1</label>
    </ligand>
</feature>
<feature type="binding site" evidence="1">
    <location>
        <position position="130"/>
    </location>
    <ligand>
        <name>Zn(2+)</name>
        <dbReference type="ChEBI" id="CHEBI:29105"/>
        <label>1</label>
    </ligand>
</feature>
<feature type="binding site" evidence="1">
    <location>
        <position position="130"/>
    </location>
    <ligand>
        <name>Zn(2+)</name>
        <dbReference type="ChEBI" id="CHEBI:29105"/>
        <label>2</label>
    </ligand>
</feature>
<feature type="binding site" evidence="1">
    <location>
        <position position="168"/>
    </location>
    <ligand>
        <name>Zn(2+)</name>
        <dbReference type="ChEBI" id="CHEBI:29105"/>
        <label>2</label>
    </ligand>
</feature>
<proteinExistence type="inferred from homology"/>
<reference key="1">
    <citation type="journal article" date="2004" name="Nat. Genet.">
        <title>Evidence in the Legionella pneumophila genome for exploitation of host cell functions and high genome plasticity.</title>
        <authorList>
            <person name="Cazalet C."/>
            <person name="Rusniok C."/>
            <person name="Brueggemann H."/>
            <person name="Zidane N."/>
            <person name="Magnier A."/>
            <person name="Ma L."/>
            <person name="Tichit M."/>
            <person name="Jarraud S."/>
            <person name="Bouchier C."/>
            <person name="Vandenesch F."/>
            <person name="Kunst F."/>
            <person name="Etienne J."/>
            <person name="Glaser P."/>
            <person name="Buchrieser C."/>
        </authorList>
    </citation>
    <scope>NUCLEOTIDE SEQUENCE [LARGE SCALE GENOMIC DNA]</scope>
    <source>
        <strain>Lens</strain>
    </source>
</reference>
<comment type="function">
    <text evidence="1">Thiolesterase that catalyzes the hydrolysis of S-D-lactoyl-glutathione to form glutathione and D-lactic acid.</text>
</comment>
<comment type="catalytic activity">
    <reaction evidence="1">
        <text>an S-(2-hydroxyacyl)glutathione + H2O = a 2-hydroxy carboxylate + glutathione + H(+)</text>
        <dbReference type="Rhea" id="RHEA:21864"/>
        <dbReference type="ChEBI" id="CHEBI:15377"/>
        <dbReference type="ChEBI" id="CHEBI:15378"/>
        <dbReference type="ChEBI" id="CHEBI:57925"/>
        <dbReference type="ChEBI" id="CHEBI:58896"/>
        <dbReference type="ChEBI" id="CHEBI:71261"/>
        <dbReference type="EC" id="3.1.2.6"/>
    </reaction>
</comment>
<comment type="cofactor">
    <cofactor evidence="1">
        <name>Zn(2+)</name>
        <dbReference type="ChEBI" id="CHEBI:29105"/>
    </cofactor>
    <text evidence="1">Binds 2 Zn(2+) ions per subunit.</text>
</comment>
<comment type="pathway">
    <text evidence="1">Secondary metabolite metabolism; methylglyoxal degradation; (R)-lactate from methylglyoxal: step 2/2.</text>
</comment>
<comment type="subunit">
    <text evidence="1">Monomer.</text>
</comment>
<comment type="similarity">
    <text evidence="1">Belongs to the metallo-beta-lactamase superfamily. Glyoxalase II family.</text>
</comment>
<organism>
    <name type="scientific">Legionella pneumophila (strain Lens)</name>
    <dbReference type="NCBI Taxonomy" id="297245"/>
    <lineage>
        <taxon>Bacteria</taxon>
        <taxon>Pseudomonadati</taxon>
        <taxon>Pseudomonadota</taxon>
        <taxon>Gammaproteobacteria</taxon>
        <taxon>Legionellales</taxon>
        <taxon>Legionellaceae</taxon>
        <taxon>Legionella</taxon>
    </lineage>
</organism>
<sequence length="254" mass="28730">MTILPISAFSDNYIWTFIDKIAGVLDCVDPGESAPIIRFAQSNQLTLRTILLTHHHYDHIGGVDSLIKQWPSCKVYGPIDERISNLTHPIKQGQSVQVGSLHFHILFNPGHTSTHISYYEPQQGWLFCGDTLFSAGCGRVFDGTIEELHESLLLFKKLPRNTKIFCAHEYTLQNLKFAHTVEPCNSSVINYMQQILKQPSPCTLPSNIDLELSINPFLRTDKEQVKQYALSHGANSSDSLDVFEVLRNQKNSFK</sequence>